<gene>
    <name type="primary">Klhl15</name>
</gene>
<protein>
    <recommendedName>
        <fullName>Kelch-like protein 15</fullName>
    </recommendedName>
</protein>
<proteinExistence type="evidence at transcript level"/>
<accession>D3ZA50</accession>
<sequence length="604" mass="69745">MAGDVEGFCSSIHDTSVSAGFRALYEEGLLLDVTLVIEDHQFQAHKALLATQSDYFRIMFTADMRERDQDKIHLKGLTATGFSHVLQFMYYGTIELSMNTVHEILQAAMYVQLIEVVKFCCSFLLAKICLENCAEIMRLLDDFGVNIEGVREKLDAFLLDNFVPLMSRPDFLSYLSFEKLMSYLDNDHLSRFPEIELYEAVQSWLRHDRRRWRHTDTIIQNIRFCLMTPSSVFEKVKTSEFYRYSRQLRYEVDQALNYFQNVHQQPLLDMKSSRIRSAKPQTTVFRGMIGHSMVNSKILLLKKPRVWWELEGPQVPLRPDCLAIVNNFVFLLGGEELGPDGEFHASSKVFRYDPRQNSWLRMADMSVPRSEFAVGVIGKFIYAVAGRTRDETFYSTERYDITNDKWEFVDPYPVNKYGHEGTVLNNKLFITGGITSSSTSKQVCVFDPSKEGTIEQRTRRTQVVTNCWENKSKMNYARCFHKMISYNGKLYVFGGVCVILRASFESQGCPSTEVYNPDTDQWTILASMPIGRSGHGVTVLDKQIMVLGGLCYNGHYSDSILTFDPDENKWKEDEYPRMPCKLDGLQVCNLHFPDYVLDEVRRCN</sequence>
<comment type="function">
    <text evidence="1">Substrate-specific adapter for CUL3 E3 ubiquitin-protein ligase complex. Acts as an adapter for CUL3 to target the serine/threonine-protein phosphatase 2A (PP2A) subunit PPP2R5B for ubiquitination and subsequent proteasomal degradation, thus promoting exchange with other regulatory subunits and regulating PP2A holoenzyme composition. Acts as an adapter for CUL3 to target the DNA-end resection factor RBBP8/CtIP for ubiquitination and subsequent proteasomal degradation. Through the regulation of RBBP8/CtIP protein turnover, plays a key role in DNA damage response, favoring DNA double-strand repair through error-prone non-homologous end joining (NHEJ) over error-free, RBBP8-mediated homologous recombination (HR).</text>
</comment>
<comment type="pathway">
    <text>Protein modification; protein ubiquitination.</text>
</comment>
<comment type="subunit">
    <text evidence="1">Homodimer. Dimerization does not affect PPP2R5B-binding, but is required for its proteasomal degradation. Interacts with CUL3. Directly interacts with PPP2R5B; this interaction leads to PPP2R5B proteasomal degradation. Interacts with RBBP8/CtIP; this interaction leads to RBBP8 proteasomal degradation. Interacts with PACMP micropeptide; interaction prevents ubiquitination and degradation of RBBP8/CtIP.</text>
</comment>
<comment type="subcellular location">
    <subcellularLocation>
        <location evidence="1">Nucleus</location>
    </subcellularLocation>
</comment>
<comment type="tissue specificity">
    <text evidence="3">Widely expressed at the mRNA level, with the highest levels in lung, muscle, and spleen.</text>
</comment>
<dbReference type="EMBL" id="AABR07038874">
    <property type="status" value="NOT_ANNOTATED_CDS"/>
    <property type="molecule type" value="Genomic_DNA"/>
</dbReference>
<dbReference type="EMBL" id="AABR07038875">
    <property type="status" value="NOT_ANNOTATED_CDS"/>
    <property type="molecule type" value="Genomic_DNA"/>
</dbReference>
<dbReference type="EMBL" id="AABR07038876">
    <property type="status" value="NOT_ANNOTATED_CDS"/>
    <property type="molecule type" value="Genomic_DNA"/>
</dbReference>
<dbReference type="EMBL" id="AABR07038877">
    <property type="status" value="NOT_ANNOTATED_CDS"/>
    <property type="molecule type" value="Genomic_DNA"/>
</dbReference>
<dbReference type="EMBL" id="CH473966">
    <property type="protein sequence ID" value="EDL96006.1"/>
    <property type="molecule type" value="Genomic_DNA"/>
</dbReference>
<dbReference type="RefSeq" id="NP_001101491.1">
    <property type="nucleotide sequence ID" value="NM_001108021.2"/>
</dbReference>
<dbReference type="RefSeq" id="NP_001420981.1">
    <property type="nucleotide sequence ID" value="NM_001434052.1"/>
</dbReference>
<dbReference type="RefSeq" id="NP_001420982.1">
    <property type="nucleotide sequence ID" value="NM_001434053.1"/>
</dbReference>
<dbReference type="RefSeq" id="NP_001420983.1">
    <property type="nucleotide sequence ID" value="NM_001434054.1"/>
</dbReference>
<dbReference type="RefSeq" id="NP_001420984.1">
    <property type="nucleotide sequence ID" value="NM_001434055.1"/>
</dbReference>
<dbReference type="RefSeq" id="NP_001420986.1">
    <property type="nucleotide sequence ID" value="NM_001434057.1"/>
</dbReference>
<dbReference type="RefSeq" id="NP_001420987.1">
    <property type="nucleotide sequence ID" value="NM_001434058.1"/>
</dbReference>
<dbReference type="RefSeq" id="XP_017457528.1">
    <property type="nucleotide sequence ID" value="XM_017602039.1"/>
</dbReference>
<dbReference type="RefSeq" id="XP_017457529.1">
    <property type="nucleotide sequence ID" value="XM_017602040.1"/>
</dbReference>
<dbReference type="RefSeq" id="XP_017457530.1">
    <property type="nucleotide sequence ID" value="XM_017602041.1"/>
</dbReference>
<dbReference type="RefSeq" id="XP_017457531.1">
    <property type="nucleotide sequence ID" value="XM_017602042.3"/>
</dbReference>
<dbReference type="RefSeq" id="XP_017457532.1">
    <property type="nucleotide sequence ID" value="XM_017602043.1"/>
</dbReference>
<dbReference type="RefSeq" id="XP_017457533.1">
    <property type="nucleotide sequence ID" value="XM_017602044.1"/>
</dbReference>
<dbReference type="RefSeq" id="XP_017457534.1">
    <property type="nucleotide sequence ID" value="XM_017602045.1"/>
</dbReference>
<dbReference type="RefSeq" id="XP_063136066.1">
    <property type="nucleotide sequence ID" value="XM_063279996.1"/>
</dbReference>
<dbReference type="RefSeq" id="XP_063136067.1">
    <property type="nucleotide sequence ID" value="XM_063279997.1"/>
</dbReference>
<dbReference type="RefSeq" id="XP_063136068.1">
    <property type="nucleotide sequence ID" value="XM_063279998.1"/>
</dbReference>
<dbReference type="RefSeq" id="XP_063136069.1">
    <property type="nucleotide sequence ID" value="XM_063279999.1"/>
</dbReference>
<dbReference type="RefSeq" id="XP_063136070.1">
    <property type="nucleotide sequence ID" value="XM_063280000.1"/>
</dbReference>
<dbReference type="SMR" id="D3ZA50"/>
<dbReference type="FunCoup" id="D3ZA50">
    <property type="interactions" value="363"/>
</dbReference>
<dbReference type="STRING" id="10116.ENSRNOP00000068396"/>
<dbReference type="PhosphoSitePlus" id="D3ZA50"/>
<dbReference type="PaxDb" id="10116-ENSRNOP00000068396"/>
<dbReference type="Ensembl" id="ENSRNOT00000008558.6">
    <property type="protein sequence ID" value="ENSRNOP00000008558.5"/>
    <property type="gene ID" value="ENSRNOG00000006515.8"/>
</dbReference>
<dbReference type="GeneID" id="314111"/>
<dbReference type="KEGG" id="rno:314111"/>
<dbReference type="AGR" id="RGD:1563101"/>
<dbReference type="CTD" id="80311"/>
<dbReference type="RGD" id="1563101">
    <property type="gene designation" value="Klhl15"/>
</dbReference>
<dbReference type="eggNOG" id="KOG4441">
    <property type="taxonomic scope" value="Eukaryota"/>
</dbReference>
<dbReference type="GeneTree" id="ENSGT00940000159116"/>
<dbReference type="HOGENOM" id="CLU_004253_16_1_1"/>
<dbReference type="InParanoid" id="D3ZA50"/>
<dbReference type="OMA" id="PRHNSWL"/>
<dbReference type="OrthoDB" id="45365at2759"/>
<dbReference type="PhylomeDB" id="D3ZA50"/>
<dbReference type="TreeFam" id="TF328485"/>
<dbReference type="UniPathway" id="UPA00143"/>
<dbReference type="PRO" id="PR:D3ZA50"/>
<dbReference type="Proteomes" id="UP000002494">
    <property type="component" value="Chromosome X"/>
</dbReference>
<dbReference type="Proteomes" id="UP000234681">
    <property type="component" value="Chromosome x"/>
</dbReference>
<dbReference type="Bgee" id="ENSRNOG00000006515">
    <property type="expression patterns" value="Expressed in testis and 18 other cell types or tissues"/>
</dbReference>
<dbReference type="ExpressionAtlas" id="D3ZA50">
    <property type="expression patterns" value="baseline and differential"/>
</dbReference>
<dbReference type="GO" id="GO:0031463">
    <property type="term" value="C:Cul3-RING ubiquitin ligase complex"/>
    <property type="evidence" value="ECO:0000266"/>
    <property type="project" value="RGD"/>
</dbReference>
<dbReference type="GO" id="GO:0005634">
    <property type="term" value="C:nucleus"/>
    <property type="evidence" value="ECO:0000250"/>
    <property type="project" value="UniProtKB"/>
</dbReference>
<dbReference type="GO" id="GO:1990756">
    <property type="term" value="F:ubiquitin-like ligase-substrate adaptor activity"/>
    <property type="evidence" value="ECO:0000250"/>
    <property type="project" value="UniProtKB"/>
</dbReference>
<dbReference type="GO" id="GO:2000042">
    <property type="term" value="P:negative regulation of double-strand break repair via homologous recombination"/>
    <property type="evidence" value="ECO:0000250"/>
    <property type="project" value="UniProtKB"/>
</dbReference>
<dbReference type="GO" id="GO:0071630">
    <property type="term" value="P:nuclear protein quality control by the ubiquitin-proteasome system"/>
    <property type="evidence" value="ECO:0000250"/>
    <property type="project" value="UniProtKB"/>
</dbReference>
<dbReference type="GO" id="GO:0016567">
    <property type="term" value="P:protein ubiquitination"/>
    <property type="evidence" value="ECO:0007669"/>
    <property type="project" value="UniProtKB-UniPathway"/>
</dbReference>
<dbReference type="GO" id="GO:0006511">
    <property type="term" value="P:ubiquitin-dependent protein catabolic process"/>
    <property type="evidence" value="ECO:0000250"/>
    <property type="project" value="UniProtKB"/>
</dbReference>
<dbReference type="CDD" id="cd18454">
    <property type="entry name" value="BACK_KLHL15"/>
    <property type="match status" value="1"/>
</dbReference>
<dbReference type="CDD" id="cd18244">
    <property type="entry name" value="BTB_POZ_KLHL15"/>
    <property type="match status" value="1"/>
</dbReference>
<dbReference type="FunFam" id="3.30.710.10:FF:000087">
    <property type="entry name" value="Kelch-like family member 15"/>
    <property type="match status" value="1"/>
</dbReference>
<dbReference type="FunFam" id="1.25.40.420:FF:000009">
    <property type="entry name" value="Kelch-like protein 15"/>
    <property type="match status" value="1"/>
</dbReference>
<dbReference type="FunFam" id="2.120.10.80:FF:000014">
    <property type="entry name" value="Kelch-like protein 15"/>
    <property type="match status" value="1"/>
</dbReference>
<dbReference type="Gene3D" id="1.25.40.420">
    <property type="match status" value="1"/>
</dbReference>
<dbReference type="Gene3D" id="2.120.10.80">
    <property type="entry name" value="Kelch-type beta propeller"/>
    <property type="match status" value="1"/>
</dbReference>
<dbReference type="Gene3D" id="3.30.710.10">
    <property type="entry name" value="Potassium Channel Kv1.1, Chain A"/>
    <property type="match status" value="1"/>
</dbReference>
<dbReference type="InterPro" id="IPR011705">
    <property type="entry name" value="BACK"/>
</dbReference>
<dbReference type="InterPro" id="IPR017096">
    <property type="entry name" value="BTB-kelch_protein"/>
</dbReference>
<dbReference type="InterPro" id="IPR000210">
    <property type="entry name" value="BTB/POZ_dom"/>
</dbReference>
<dbReference type="InterPro" id="IPR030597">
    <property type="entry name" value="BTB_POZ_KLHL15"/>
</dbReference>
<dbReference type="InterPro" id="IPR015915">
    <property type="entry name" value="Kelch-typ_b-propeller"/>
</dbReference>
<dbReference type="InterPro" id="IPR006652">
    <property type="entry name" value="Kelch_1"/>
</dbReference>
<dbReference type="InterPro" id="IPR047030">
    <property type="entry name" value="KLHL15_BACK"/>
</dbReference>
<dbReference type="InterPro" id="IPR011333">
    <property type="entry name" value="SKP1/BTB/POZ_sf"/>
</dbReference>
<dbReference type="PANTHER" id="PTHR45632:SF12">
    <property type="entry name" value="KELCH-LIKE PROTEIN 15"/>
    <property type="match status" value="1"/>
</dbReference>
<dbReference type="PANTHER" id="PTHR45632">
    <property type="entry name" value="LD33804P"/>
    <property type="match status" value="1"/>
</dbReference>
<dbReference type="Pfam" id="PF07707">
    <property type="entry name" value="BACK"/>
    <property type="match status" value="1"/>
</dbReference>
<dbReference type="Pfam" id="PF00651">
    <property type="entry name" value="BTB"/>
    <property type="match status" value="1"/>
</dbReference>
<dbReference type="Pfam" id="PF01344">
    <property type="entry name" value="Kelch_1"/>
    <property type="match status" value="2"/>
</dbReference>
<dbReference type="Pfam" id="PF13964">
    <property type="entry name" value="Kelch_6"/>
    <property type="match status" value="1"/>
</dbReference>
<dbReference type="PIRSF" id="PIRSF037037">
    <property type="entry name" value="Kelch-like_protein_gigaxonin"/>
    <property type="match status" value="1"/>
</dbReference>
<dbReference type="SMART" id="SM00875">
    <property type="entry name" value="BACK"/>
    <property type="match status" value="1"/>
</dbReference>
<dbReference type="SMART" id="SM00225">
    <property type="entry name" value="BTB"/>
    <property type="match status" value="1"/>
</dbReference>
<dbReference type="SMART" id="SM00612">
    <property type="entry name" value="Kelch"/>
    <property type="match status" value="5"/>
</dbReference>
<dbReference type="SUPFAM" id="SSF117281">
    <property type="entry name" value="Kelch motif"/>
    <property type="match status" value="1"/>
</dbReference>
<dbReference type="SUPFAM" id="SSF54695">
    <property type="entry name" value="POZ domain"/>
    <property type="match status" value="1"/>
</dbReference>
<dbReference type="PROSITE" id="PS50097">
    <property type="entry name" value="BTB"/>
    <property type="match status" value="1"/>
</dbReference>
<keyword id="KW-0880">Kelch repeat</keyword>
<keyword id="KW-0539">Nucleus</keyword>
<keyword id="KW-1185">Reference proteome</keyword>
<keyword id="KW-0677">Repeat</keyword>
<keyword id="KW-0833">Ubl conjugation pathway</keyword>
<organism>
    <name type="scientific">Rattus norvegicus</name>
    <name type="common">Rat</name>
    <dbReference type="NCBI Taxonomy" id="10116"/>
    <lineage>
        <taxon>Eukaryota</taxon>
        <taxon>Metazoa</taxon>
        <taxon>Chordata</taxon>
        <taxon>Craniata</taxon>
        <taxon>Vertebrata</taxon>
        <taxon>Euteleostomi</taxon>
        <taxon>Mammalia</taxon>
        <taxon>Eutheria</taxon>
        <taxon>Euarchontoglires</taxon>
        <taxon>Glires</taxon>
        <taxon>Rodentia</taxon>
        <taxon>Myomorpha</taxon>
        <taxon>Muroidea</taxon>
        <taxon>Muridae</taxon>
        <taxon>Murinae</taxon>
        <taxon>Rattus</taxon>
    </lineage>
</organism>
<evidence type="ECO:0000250" key="1">
    <source>
        <dbReference type="UniProtKB" id="Q96M94"/>
    </source>
</evidence>
<evidence type="ECO:0000255" key="2">
    <source>
        <dbReference type="PROSITE-ProRule" id="PRU00037"/>
    </source>
</evidence>
<evidence type="ECO:0000269" key="3">
    <source>
    </source>
</evidence>
<reference key="1">
    <citation type="journal article" date="2004" name="Nature">
        <title>Genome sequence of the Brown Norway rat yields insights into mammalian evolution.</title>
        <authorList>
            <person name="Gibbs R.A."/>
            <person name="Weinstock G.M."/>
            <person name="Metzker M.L."/>
            <person name="Muzny D.M."/>
            <person name="Sodergren E.J."/>
            <person name="Scherer S."/>
            <person name="Scott G."/>
            <person name="Steffen D."/>
            <person name="Worley K.C."/>
            <person name="Burch P.E."/>
            <person name="Okwuonu G."/>
            <person name="Hines S."/>
            <person name="Lewis L."/>
            <person name="Deramo C."/>
            <person name="Delgado O."/>
            <person name="Dugan-Rocha S."/>
            <person name="Miner G."/>
            <person name="Morgan M."/>
            <person name="Hawes A."/>
            <person name="Gill R."/>
            <person name="Holt R.A."/>
            <person name="Adams M.D."/>
            <person name="Amanatides P.G."/>
            <person name="Baden-Tillson H."/>
            <person name="Barnstead M."/>
            <person name="Chin S."/>
            <person name="Evans C.A."/>
            <person name="Ferriera S."/>
            <person name="Fosler C."/>
            <person name="Glodek A."/>
            <person name="Gu Z."/>
            <person name="Jennings D."/>
            <person name="Kraft C.L."/>
            <person name="Nguyen T."/>
            <person name="Pfannkoch C.M."/>
            <person name="Sitter C."/>
            <person name="Sutton G.G."/>
            <person name="Venter J.C."/>
            <person name="Woodage T."/>
            <person name="Smith D."/>
            <person name="Lee H.-M."/>
            <person name="Gustafson E."/>
            <person name="Cahill P."/>
            <person name="Kana A."/>
            <person name="Doucette-Stamm L."/>
            <person name="Weinstock K."/>
            <person name="Fechtel K."/>
            <person name="Weiss R.B."/>
            <person name="Dunn D.M."/>
            <person name="Green E.D."/>
            <person name="Blakesley R.W."/>
            <person name="Bouffard G.G."/>
            <person name="De Jong P.J."/>
            <person name="Osoegawa K."/>
            <person name="Zhu B."/>
            <person name="Marra M."/>
            <person name="Schein J."/>
            <person name="Bosdet I."/>
            <person name="Fjell C."/>
            <person name="Jones S."/>
            <person name="Krzywinski M."/>
            <person name="Mathewson C."/>
            <person name="Siddiqui A."/>
            <person name="Wye N."/>
            <person name="McPherson J."/>
            <person name="Zhao S."/>
            <person name="Fraser C.M."/>
            <person name="Shetty J."/>
            <person name="Shatsman S."/>
            <person name="Geer K."/>
            <person name="Chen Y."/>
            <person name="Abramzon S."/>
            <person name="Nierman W.C."/>
            <person name="Havlak P.H."/>
            <person name="Chen R."/>
            <person name="Durbin K.J."/>
            <person name="Egan A."/>
            <person name="Ren Y."/>
            <person name="Song X.-Z."/>
            <person name="Li B."/>
            <person name="Liu Y."/>
            <person name="Qin X."/>
            <person name="Cawley S."/>
            <person name="Cooney A.J."/>
            <person name="D'Souza L.M."/>
            <person name="Martin K."/>
            <person name="Wu J.Q."/>
            <person name="Gonzalez-Garay M.L."/>
            <person name="Jackson A.R."/>
            <person name="Kalafus K.J."/>
            <person name="McLeod M.P."/>
            <person name="Milosavljevic A."/>
            <person name="Virk D."/>
            <person name="Volkov A."/>
            <person name="Wheeler D.A."/>
            <person name="Zhang Z."/>
            <person name="Bailey J.A."/>
            <person name="Eichler E.E."/>
            <person name="Tuzun E."/>
            <person name="Birney E."/>
            <person name="Mongin E."/>
            <person name="Ureta-Vidal A."/>
            <person name="Woodwark C."/>
            <person name="Zdobnov E."/>
            <person name="Bork P."/>
            <person name="Suyama M."/>
            <person name="Torrents D."/>
            <person name="Alexandersson M."/>
            <person name="Trask B.J."/>
            <person name="Young J.M."/>
            <person name="Huang H."/>
            <person name="Wang H."/>
            <person name="Xing H."/>
            <person name="Daniels S."/>
            <person name="Gietzen D."/>
            <person name="Schmidt J."/>
            <person name="Stevens K."/>
            <person name="Vitt U."/>
            <person name="Wingrove J."/>
            <person name="Camara F."/>
            <person name="Mar Alba M."/>
            <person name="Abril J.F."/>
            <person name="Guigo R."/>
            <person name="Smit A."/>
            <person name="Dubchak I."/>
            <person name="Rubin E.M."/>
            <person name="Couronne O."/>
            <person name="Poliakov A."/>
            <person name="Huebner N."/>
            <person name="Ganten D."/>
            <person name="Goesele C."/>
            <person name="Hummel O."/>
            <person name="Kreitler T."/>
            <person name="Lee Y.-A."/>
            <person name="Monti J."/>
            <person name="Schulz H."/>
            <person name="Zimdahl H."/>
            <person name="Himmelbauer H."/>
            <person name="Lehrach H."/>
            <person name="Jacob H.J."/>
            <person name="Bromberg S."/>
            <person name="Gullings-Handley J."/>
            <person name="Jensen-Seaman M.I."/>
            <person name="Kwitek A.E."/>
            <person name="Lazar J."/>
            <person name="Pasko D."/>
            <person name="Tonellato P.J."/>
            <person name="Twigger S."/>
            <person name="Ponting C.P."/>
            <person name="Duarte J.M."/>
            <person name="Rice S."/>
            <person name="Goodstadt L."/>
            <person name="Beatson S.A."/>
            <person name="Emes R.D."/>
            <person name="Winter E.E."/>
            <person name="Webber C."/>
            <person name="Brandt P."/>
            <person name="Nyakatura G."/>
            <person name="Adetobi M."/>
            <person name="Chiaromonte F."/>
            <person name="Elnitski L."/>
            <person name="Eswara P."/>
            <person name="Hardison R.C."/>
            <person name="Hou M."/>
            <person name="Kolbe D."/>
            <person name="Makova K."/>
            <person name="Miller W."/>
            <person name="Nekrutenko A."/>
            <person name="Riemer C."/>
            <person name="Schwartz S."/>
            <person name="Taylor J."/>
            <person name="Yang S."/>
            <person name="Zhang Y."/>
            <person name="Lindpaintner K."/>
            <person name="Andrews T.D."/>
            <person name="Caccamo M."/>
            <person name="Clamp M."/>
            <person name="Clarke L."/>
            <person name="Curwen V."/>
            <person name="Durbin R.M."/>
            <person name="Eyras E."/>
            <person name="Searle S.M."/>
            <person name="Cooper G.M."/>
            <person name="Batzoglou S."/>
            <person name="Brudno M."/>
            <person name="Sidow A."/>
            <person name="Stone E.A."/>
            <person name="Payseur B.A."/>
            <person name="Bourque G."/>
            <person name="Lopez-Otin C."/>
            <person name="Puente X.S."/>
            <person name="Chakrabarti K."/>
            <person name="Chatterji S."/>
            <person name="Dewey C."/>
            <person name="Pachter L."/>
            <person name="Bray N."/>
            <person name="Yap V.B."/>
            <person name="Caspi A."/>
            <person name="Tesler G."/>
            <person name="Pevzner P.A."/>
            <person name="Haussler D."/>
            <person name="Roskin K.M."/>
            <person name="Baertsch R."/>
            <person name="Clawson H."/>
            <person name="Furey T.S."/>
            <person name="Hinrichs A.S."/>
            <person name="Karolchik D."/>
            <person name="Kent W.J."/>
            <person name="Rosenbloom K.R."/>
            <person name="Trumbower H."/>
            <person name="Weirauch M."/>
            <person name="Cooper D.N."/>
            <person name="Stenson P.D."/>
            <person name="Ma B."/>
            <person name="Brent M."/>
            <person name="Arumugam M."/>
            <person name="Shteynberg D."/>
            <person name="Copley R.R."/>
            <person name="Taylor M.S."/>
            <person name="Riethman H."/>
            <person name="Mudunuri U."/>
            <person name="Peterson J."/>
            <person name="Guyer M."/>
            <person name="Felsenfeld A."/>
            <person name="Old S."/>
            <person name="Mockrin S."/>
            <person name="Collins F.S."/>
        </authorList>
    </citation>
    <scope>NUCLEOTIDE SEQUENCE [LARGE SCALE GENOMIC DNA]</scope>
    <source>
        <strain>Brown Norway</strain>
    </source>
</reference>
<reference key="2">
    <citation type="submission" date="2005-09" db="EMBL/GenBank/DDBJ databases">
        <authorList>
            <person name="Mural R.J."/>
            <person name="Adams M.D."/>
            <person name="Myers E.W."/>
            <person name="Smith H.O."/>
            <person name="Venter J.C."/>
        </authorList>
    </citation>
    <scope>NUCLEOTIDE SEQUENCE [LARGE SCALE GENOMIC DNA]</scope>
    <source>
        <strain>Brown Norway</strain>
    </source>
</reference>
<reference key="3">
    <citation type="journal article" date="2012" name="J. Biol. Chem.">
        <title>Selective proteasomal degradation of the B'beta subunit of protein phosphatase 2A by the E3 ubiquitin ligase adaptor Kelch-like 15.</title>
        <authorList>
            <person name="Oberg E.A."/>
            <person name="Nifoussi S.K."/>
            <person name="Gingras A.C."/>
            <person name="Strack S."/>
        </authorList>
    </citation>
    <scope>TISSUE SPECIFICITY</scope>
</reference>
<feature type="chain" id="PRO_0000438649" description="Kelch-like protein 15">
    <location>
        <begin position="1"/>
        <end position="604"/>
    </location>
</feature>
<feature type="domain" description="BTB" evidence="2">
    <location>
        <begin position="31"/>
        <end position="98"/>
    </location>
</feature>
<feature type="domain" description="BACK">
    <location>
        <begin position="133"/>
        <end position="237"/>
    </location>
</feature>
<feature type="repeat" description="Kelch 1">
    <location>
        <begin position="328"/>
        <end position="379"/>
    </location>
</feature>
<feature type="repeat" description="Kelch 2">
    <location>
        <begin position="381"/>
        <end position="426"/>
    </location>
</feature>
<feature type="repeat" description="Kelch 3">
    <location>
        <begin position="428"/>
        <end position="473"/>
    </location>
</feature>
<feature type="repeat" description="Kelch 4">
    <location>
        <begin position="489"/>
        <end position="542"/>
    </location>
</feature>
<feature type="repeat" description="Kelch 5">
    <location>
        <begin position="544"/>
        <end position="590"/>
    </location>
</feature>
<name>KLH15_RAT</name>